<name>GUAA_AQUAE</name>
<comment type="function">
    <text evidence="1">Catalyzes the synthesis of GMP from XMP.</text>
</comment>
<comment type="catalytic activity">
    <reaction>
        <text>XMP + L-glutamine + ATP + H2O = GMP + L-glutamate + AMP + diphosphate + 2 H(+)</text>
        <dbReference type="Rhea" id="RHEA:11680"/>
        <dbReference type="ChEBI" id="CHEBI:15377"/>
        <dbReference type="ChEBI" id="CHEBI:15378"/>
        <dbReference type="ChEBI" id="CHEBI:29985"/>
        <dbReference type="ChEBI" id="CHEBI:30616"/>
        <dbReference type="ChEBI" id="CHEBI:33019"/>
        <dbReference type="ChEBI" id="CHEBI:57464"/>
        <dbReference type="ChEBI" id="CHEBI:58115"/>
        <dbReference type="ChEBI" id="CHEBI:58359"/>
        <dbReference type="ChEBI" id="CHEBI:456215"/>
        <dbReference type="EC" id="6.3.5.2"/>
    </reaction>
</comment>
<comment type="pathway">
    <text>Purine metabolism; GMP biosynthesis; GMP from XMP (L-Gln route): step 1/1.</text>
</comment>
<comment type="subunit">
    <text evidence="1">Homodimer.</text>
</comment>
<accession>O66601</accession>
<keyword id="KW-0067">ATP-binding</keyword>
<keyword id="KW-0315">Glutamine amidotransferase</keyword>
<keyword id="KW-0332">GMP biosynthesis</keyword>
<keyword id="KW-0436">Ligase</keyword>
<keyword id="KW-0547">Nucleotide-binding</keyword>
<keyword id="KW-0658">Purine biosynthesis</keyword>
<keyword id="KW-1185">Reference proteome</keyword>
<protein>
    <recommendedName>
        <fullName>GMP synthase [glutamine-hydrolyzing]</fullName>
        <ecNumber>6.3.5.2</ecNumber>
    </recommendedName>
    <alternativeName>
        <fullName>GMP synthetase</fullName>
    </alternativeName>
    <alternativeName>
        <fullName>Glutamine amidotransferase</fullName>
    </alternativeName>
</protein>
<feature type="chain" id="PRO_0000140088" description="GMP synthase [glutamine-hydrolyzing]">
    <location>
        <begin position="1"/>
        <end position="510"/>
    </location>
</feature>
<feature type="domain" description="Glutamine amidotransferase type-1">
    <location>
        <begin position="5"/>
        <end position="195"/>
    </location>
</feature>
<feature type="domain" description="GMPS ATP-PPase">
    <location>
        <begin position="196"/>
        <end position="385"/>
    </location>
</feature>
<feature type="active site" description="Nucleophile" evidence="1">
    <location>
        <position position="82"/>
    </location>
</feature>
<feature type="active site" evidence="1">
    <location>
        <position position="169"/>
    </location>
</feature>
<feature type="active site" evidence="1">
    <location>
        <position position="171"/>
    </location>
</feature>
<feature type="binding site" evidence="1">
    <location>
        <begin position="223"/>
        <end position="229"/>
    </location>
    <ligand>
        <name>ATP</name>
        <dbReference type="ChEBI" id="CHEBI:30616"/>
    </ligand>
</feature>
<gene>
    <name type="primary">guaA</name>
    <name type="ordered locus">aq_236</name>
</gene>
<sequence length="510" mass="57858">MQRRPILVVNFGSQYVQLIARRVRELGVYSEIVHWDTPVEEIKKKNPYGIIFSGGPASVYAEGAPLPDKRIYELGVPILGICYGLQVITHQLGGKVVRSEKQEYGRARLRIIKEDVIFEGIPKESDVWMSHADKVVELPEGFEVLAVSENSPYAVIANREKKIYGFQFHPEVTHTVFGKEMLANFIYGVCKAEKNWEMGDFIHEKIEEIRKTVGDAKVIAALSGGVDSTVAAVLTHRAIGDKLHCFFIDHGLLRYKEREEVEKNLRSLGLPLTVVDASEEFLEKLKGVEDPEEKRKIIGRTFIEVFEREAKKIEGAEFLLQGTLYPDVVESAGIKGSAKIKTHHNVGGLPERMNLKLLEPFRELFKDEVRKIGKLLGVPEEILRRHPFPGPGLAIRIIGEVNKKDLEILRKADYIFIQELKKEGLYDRVWQAFAVLLPVKSVGVMGDVRTYEKVVALRAVESVDGMTADWARLPYDFLDRVMRRIINEVEGVNRVVYDISSKPPSTIEWE</sequence>
<proteinExistence type="inferred from homology"/>
<evidence type="ECO:0000250" key="1"/>
<dbReference type="EC" id="6.3.5.2"/>
<dbReference type="EMBL" id="AE000657">
    <property type="protein sequence ID" value="AAC06558.1"/>
    <property type="molecule type" value="Genomic_DNA"/>
</dbReference>
<dbReference type="PIR" id="E70321">
    <property type="entry name" value="E70321"/>
</dbReference>
<dbReference type="RefSeq" id="NP_213161.1">
    <property type="nucleotide sequence ID" value="NC_000918.1"/>
</dbReference>
<dbReference type="RefSeq" id="WP_010880099.1">
    <property type="nucleotide sequence ID" value="NC_000918.1"/>
</dbReference>
<dbReference type="SMR" id="O66601"/>
<dbReference type="FunCoup" id="O66601">
    <property type="interactions" value="447"/>
</dbReference>
<dbReference type="STRING" id="224324.aq_236"/>
<dbReference type="MEROPS" id="C26.957"/>
<dbReference type="EnsemblBacteria" id="AAC06558">
    <property type="protein sequence ID" value="AAC06558"/>
    <property type="gene ID" value="aq_236"/>
</dbReference>
<dbReference type="KEGG" id="aae:aq_236"/>
<dbReference type="PATRIC" id="fig|224324.8.peg.193"/>
<dbReference type="eggNOG" id="COG0518">
    <property type="taxonomic scope" value="Bacteria"/>
</dbReference>
<dbReference type="eggNOG" id="COG0519">
    <property type="taxonomic scope" value="Bacteria"/>
</dbReference>
<dbReference type="HOGENOM" id="CLU_014340_0_5_0"/>
<dbReference type="InParanoid" id="O66601"/>
<dbReference type="OrthoDB" id="9802219at2"/>
<dbReference type="UniPathway" id="UPA00189">
    <property type="reaction ID" value="UER00296"/>
</dbReference>
<dbReference type="Proteomes" id="UP000000798">
    <property type="component" value="Chromosome"/>
</dbReference>
<dbReference type="GO" id="GO:0005829">
    <property type="term" value="C:cytosol"/>
    <property type="evidence" value="ECO:0000318"/>
    <property type="project" value="GO_Central"/>
</dbReference>
<dbReference type="GO" id="GO:0005524">
    <property type="term" value="F:ATP binding"/>
    <property type="evidence" value="ECO:0007669"/>
    <property type="project" value="UniProtKB-UniRule"/>
</dbReference>
<dbReference type="GO" id="GO:0003921">
    <property type="term" value="F:GMP synthase activity"/>
    <property type="evidence" value="ECO:0000318"/>
    <property type="project" value="GO_Central"/>
</dbReference>
<dbReference type="GO" id="GO:0006177">
    <property type="term" value="P:GMP biosynthetic process"/>
    <property type="evidence" value="ECO:0000318"/>
    <property type="project" value="GO_Central"/>
</dbReference>
<dbReference type="CDD" id="cd01742">
    <property type="entry name" value="GATase1_GMP_Synthase"/>
    <property type="match status" value="1"/>
</dbReference>
<dbReference type="CDD" id="cd01997">
    <property type="entry name" value="GMP_synthase_C"/>
    <property type="match status" value="1"/>
</dbReference>
<dbReference type="FunFam" id="3.30.300.10:FF:000002">
    <property type="entry name" value="GMP synthase [glutamine-hydrolyzing]"/>
    <property type="match status" value="1"/>
</dbReference>
<dbReference type="FunFam" id="3.40.50.620:FF:000001">
    <property type="entry name" value="GMP synthase [glutamine-hydrolyzing]"/>
    <property type="match status" value="1"/>
</dbReference>
<dbReference type="FunFam" id="3.40.50.880:FF:000001">
    <property type="entry name" value="GMP synthase [glutamine-hydrolyzing]"/>
    <property type="match status" value="1"/>
</dbReference>
<dbReference type="Gene3D" id="3.30.300.10">
    <property type="match status" value="1"/>
</dbReference>
<dbReference type="Gene3D" id="3.40.50.880">
    <property type="match status" value="1"/>
</dbReference>
<dbReference type="Gene3D" id="3.40.50.620">
    <property type="entry name" value="HUPs"/>
    <property type="match status" value="1"/>
</dbReference>
<dbReference type="HAMAP" id="MF_00344">
    <property type="entry name" value="GMP_synthase"/>
    <property type="match status" value="1"/>
</dbReference>
<dbReference type="InterPro" id="IPR029062">
    <property type="entry name" value="Class_I_gatase-like"/>
</dbReference>
<dbReference type="InterPro" id="IPR017926">
    <property type="entry name" value="GATASE"/>
</dbReference>
<dbReference type="InterPro" id="IPR001674">
    <property type="entry name" value="GMP_synth_C"/>
</dbReference>
<dbReference type="InterPro" id="IPR004739">
    <property type="entry name" value="GMP_synth_GATase"/>
</dbReference>
<dbReference type="InterPro" id="IPR022955">
    <property type="entry name" value="GMP_synthase"/>
</dbReference>
<dbReference type="InterPro" id="IPR025777">
    <property type="entry name" value="GMPS_ATP_PPase_dom"/>
</dbReference>
<dbReference type="InterPro" id="IPR022310">
    <property type="entry name" value="NAD/GMP_synthase"/>
</dbReference>
<dbReference type="InterPro" id="IPR014729">
    <property type="entry name" value="Rossmann-like_a/b/a_fold"/>
</dbReference>
<dbReference type="NCBIfam" id="TIGR00884">
    <property type="entry name" value="guaA_Cterm"/>
    <property type="match status" value="1"/>
</dbReference>
<dbReference type="NCBIfam" id="TIGR00888">
    <property type="entry name" value="guaA_Nterm"/>
    <property type="match status" value="1"/>
</dbReference>
<dbReference type="NCBIfam" id="NF000848">
    <property type="entry name" value="PRK00074.1"/>
    <property type="match status" value="1"/>
</dbReference>
<dbReference type="PANTHER" id="PTHR11922:SF2">
    <property type="entry name" value="GMP SYNTHASE [GLUTAMINE-HYDROLYZING]"/>
    <property type="match status" value="1"/>
</dbReference>
<dbReference type="PANTHER" id="PTHR11922">
    <property type="entry name" value="GMP SYNTHASE-RELATED"/>
    <property type="match status" value="1"/>
</dbReference>
<dbReference type="Pfam" id="PF00117">
    <property type="entry name" value="GATase"/>
    <property type="match status" value="1"/>
</dbReference>
<dbReference type="Pfam" id="PF00958">
    <property type="entry name" value="GMP_synt_C"/>
    <property type="match status" value="1"/>
</dbReference>
<dbReference type="Pfam" id="PF02540">
    <property type="entry name" value="NAD_synthase"/>
    <property type="match status" value="1"/>
</dbReference>
<dbReference type="PRINTS" id="PR00097">
    <property type="entry name" value="ANTSNTHASEII"/>
</dbReference>
<dbReference type="PRINTS" id="PR00096">
    <property type="entry name" value="GATASE"/>
</dbReference>
<dbReference type="SUPFAM" id="SSF52402">
    <property type="entry name" value="Adenine nucleotide alpha hydrolases-like"/>
    <property type="match status" value="1"/>
</dbReference>
<dbReference type="SUPFAM" id="SSF52317">
    <property type="entry name" value="Class I glutamine amidotransferase-like"/>
    <property type="match status" value="1"/>
</dbReference>
<dbReference type="SUPFAM" id="SSF54810">
    <property type="entry name" value="GMP synthetase C-terminal dimerisation domain"/>
    <property type="match status" value="1"/>
</dbReference>
<dbReference type="PROSITE" id="PS51273">
    <property type="entry name" value="GATASE_TYPE_1"/>
    <property type="match status" value="1"/>
</dbReference>
<dbReference type="PROSITE" id="PS51553">
    <property type="entry name" value="GMPS_ATP_PPASE"/>
    <property type="match status" value="1"/>
</dbReference>
<organism>
    <name type="scientific">Aquifex aeolicus (strain VF5)</name>
    <dbReference type="NCBI Taxonomy" id="224324"/>
    <lineage>
        <taxon>Bacteria</taxon>
        <taxon>Pseudomonadati</taxon>
        <taxon>Aquificota</taxon>
        <taxon>Aquificia</taxon>
        <taxon>Aquificales</taxon>
        <taxon>Aquificaceae</taxon>
        <taxon>Aquifex</taxon>
    </lineage>
</organism>
<reference key="1">
    <citation type="journal article" date="1998" name="Nature">
        <title>The complete genome of the hyperthermophilic bacterium Aquifex aeolicus.</title>
        <authorList>
            <person name="Deckert G."/>
            <person name="Warren P.V."/>
            <person name="Gaasterland T."/>
            <person name="Young W.G."/>
            <person name="Lenox A.L."/>
            <person name="Graham D.E."/>
            <person name="Overbeek R."/>
            <person name="Snead M.A."/>
            <person name="Keller M."/>
            <person name="Aujay M."/>
            <person name="Huber R."/>
            <person name="Feldman R.A."/>
            <person name="Short J.M."/>
            <person name="Olsen G.J."/>
            <person name="Swanson R.V."/>
        </authorList>
    </citation>
    <scope>NUCLEOTIDE SEQUENCE [LARGE SCALE GENOMIC DNA]</scope>
    <source>
        <strain>VF5</strain>
    </source>
</reference>